<keyword id="KW-0067">ATP-binding</keyword>
<keyword id="KW-0235">DNA replication</keyword>
<keyword id="KW-0238">DNA-binding</keyword>
<keyword id="KW-0347">Helicase</keyword>
<keyword id="KW-0378">Hydrolase</keyword>
<keyword id="KW-0413">Isomerase</keyword>
<keyword id="KW-0479">Metal-binding</keyword>
<keyword id="KW-0547">Nucleotide-binding</keyword>
<keyword id="KW-0639">Primosome</keyword>
<keyword id="KW-0862">Zinc</keyword>
<name>PRIA_CHLPN</name>
<accession>Q9Z6Y2</accession>
<accession>Q9JQA8</accession>
<dbReference type="EC" id="5.6.2.4" evidence="1"/>
<dbReference type="EMBL" id="AE001363">
    <property type="protein sequence ID" value="AAD19062.1"/>
    <property type="molecule type" value="Genomic_DNA"/>
</dbReference>
<dbReference type="EMBL" id="AE002161">
    <property type="protein sequence ID" value="AAF38725.1"/>
    <property type="molecule type" value="Genomic_DNA"/>
</dbReference>
<dbReference type="EMBL" id="BA000008">
    <property type="protein sequence ID" value="BAA99132.1"/>
    <property type="molecule type" value="Genomic_DNA"/>
</dbReference>
<dbReference type="EMBL" id="AE009440">
    <property type="protein sequence ID" value="AAP98885.1"/>
    <property type="molecule type" value="Genomic_DNA"/>
</dbReference>
<dbReference type="PIR" id="B86606">
    <property type="entry name" value="B86606"/>
</dbReference>
<dbReference type="PIR" id="C72018">
    <property type="entry name" value="C72018"/>
</dbReference>
<dbReference type="RefSeq" id="NP_225119.1">
    <property type="nucleotide sequence ID" value="NC_000922.1"/>
</dbReference>
<dbReference type="RefSeq" id="WP_010883559.1">
    <property type="nucleotide sequence ID" value="NZ_LN847257.1"/>
</dbReference>
<dbReference type="SMR" id="Q9Z6Y2"/>
<dbReference type="STRING" id="406984.CPK_ORF00334"/>
<dbReference type="GeneID" id="45050980"/>
<dbReference type="KEGG" id="cpa:CP_0942"/>
<dbReference type="KEGG" id="cpj:priA"/>
<dbReference type="KEGG" id="cpn:CPn_0924"/>
<dbReference type="KEGG" id="cpt:CpB0955"/>
<dbReference type="PATRIC" id="fig|115713.3.peg.1005"/>
<dbReference type="eggNOG" id="COG1198">
    <property type="taxonomic scope" value="Bacteria"/>
</dbReference>
<dbReference type="HOGENOM" id="CLU_013353_3_0_0"/>
<dbReference type="OrthoDB" id="9759544at2"/>
<dbReference type="Proteomes" id="UP000000583">
    <property type="component" value="Chromosome"/>
</dbReference>
<dbReference type="Proteomes" id="UP000000801">
    <property type="component" value="Chromosome"/>
</dbReference>
<dbReference type="GO" id="GO:1990077">
    <property type="term" value="C:primosome complex"/>
    <property type="evidence" value="ECO:0007669"/>
    <property type="project" value="UniProtKB-UniRule"/>
</dbReference>
<dbReference type="GO" id="GO:0043138">
    <property type="term" value="F:3'-5' DNA helicase activity"/>
    <property type="evidence" value="ECO:0007669"/>
    <property type="project" value="TreeGrafter"/>
</dbReference>
<dbReference type="GO" id="GO:0005524">
    <property type="term" value="F:ATP binding"/>
    <property type="evidence" value="ECO:0007669"/>
    <property type="project" value="UniProtKB-UniRule"/>
</dbReference>
<dbReference type="GO" id="GO:0016887">
    <property type="term" value="F:ATP hydrolysis activity"/>
    <property type="evidence" value="ECO:0007669"/>
    <property type="project" value="RHEA"/>
</dbReference>
<dbReference type="GO" id="GO:0003677">
    <property type="term" value="F:DNA binding"/>
    <property type="evidence" value="ECO:0007669"/>
    <property type="project" value="UniProtKB-UniRule"/>
</dbReference>
<dbReference type="GO" id="GO:0008270">
    <property type="term" value="F:zinc ion binding"/>
    <property type="evidence" value="ECO:0007669"/>
    <property type="project" value="UniProtKB-UniRule"/>
</dbReference>
<dbReference type="GO" id="GO:0006310">
    <property type="term" value="P:DNA recombination"/>
    <property type="evidence" value="ECO:0007669"/>
    <property type="project" value="InterPro"/>
</dbReference>
<dbReference type="GO" id="GO:0006270">
    <property type="term" value="P:DNA replication initiation"/>
    <property type="evidence" value="ECO:0007669"/>
    <property type="project" value="TreeGrafter"/>
</dbReference>
<dbReference type="GO" id="GO:0006269">
    <property type="term" value="P:DNA replication, synthesis of primer"/>
    <property type="evidence" value="ECO:0007669"/>
    <property type="project" value="UniProtKB-KW"/>
</dbReference>
<dbReference type="GO" id="GO:0006302">
    <property type="term" value="P:double-strand break repair"/>
    <property type="evidence" value="ECO:0007669"/>
    <property type="project" value="InterPro"/>
</dbReference>
<dbReference type="CDD" id="cd17929">
    <property type="entry name" value="DEXHc_priA"/>
    <property type="match status" value="1"/>
</dbReference>
<dbReference type="CDD" id="cd18804">
    <property type="entry name" value="SF2_C_priA"/>
    <property type="match status" value="1"/>
</dbReference>
<dbReference type="FunFam" id="3.40.50.300:FF:000489">
    <property type="entry name" value="Primosome assembly protein PriA"/>
    <property type="match status" value="1"/>
</dbReference>
<dbReference type="Gene3D" id="3.40.50.300">
    <property type="entry name" value="P-loop containing nucleotide triphosphate hydrolases"/>
    <property type="match status" value="2"/>
</dbReference>
<dbReference type="Gene3D" id="3.40.1440.60">
    <property type="entry name" value="PriA, 3(prime) DNA-binding domain"/>
    <property type="match status" value="1"/>
</dbReference>
<dbReference type="HAMAP" id="MF_00983">
    <property type="entry name" value="PriA"/>
    <property type="match status" value="1"/>
</dbReference>
<dbReference type="InterPro" id="IPR011545">
    <property type="entry name" value="DEAD/DEAH_box_helicase_dom"/>
</dbReference>
<dbReference type="InterPro" id="IPR014001">
    <property type="entry name" value="Helicase_ATP-bd"/>
</dbReference>
<dbReference type="InterPro" id="IPR001650">
    <property type="entry name" value="Helicase_C-like"/>
</dbReference>
<dbReference type="InterPro" id="IPR027417">
    <property type="entry name" value="P-loop_NTPase"/>
</dbReference>
<dbReference type="InterPro" id="IPR005259">
    <property type="entry name" value="PriA"/>
</dbReference>
<dbReference type="InterPro" id="IPR041222">
    <property type="entry name" value="PriA_3primeBD"/>
</dbReference>
<dbReference type="InterPro" id="IPR042115">
    <property type="entry name" value="PriA_3primeBD_sf"/>
</dbReference>
<dbReference type="InterPro" id="IPR041236">
    <property type="entry name" value="PriA_C"/>
</dbReference>
<dbReference type="InterPro" id="IPR040498">
    <property type="entry name" value="PriA_CRR"/>
</dbReference>
<dbReference type="InterPro" id="IPR050880">
    <property type="entry name" value="PriA_helicase"/>
</dbReference>
<dbReference type="NCBIfam" id="TIGR00595">
    <property type="entry name" value="priA"/>
    <property type="match status" value="1"/>
</dbReference>
<dbReference type="NCBIfam" id="NF004066">
    <property type="entry name" value="PRK05580.1-3"/>
    <property type="match status" value="1"/>
</dbReference>
<dbReference type="PANTHER" id="PTHR30580">
    <property type="entry name" value="PRIMOSOMAL PROTEIN N"/>
    <property type="match status" value="1"/>
</dbReference>
<dbReference type="PANTHER" id="PTHR30580:SF0">
    <property type="entry name" value="PRIMOSOMAL PROTEIN N"/>
    <property type="match status" value="1"/>
</dbReference>
<dbReference type="Pfam" id="PF00270">
    <property type="entry name" value="DEAD"/>
    <property type="match status" value="1"/>
</dbReference>
<dbReference type="Pfam" id="PF00271">
    <property type="entry name" value="Helicase_C"/>
    <property type="match status" value="1"/>
</dbReference>
<dbReference type="Pfam" id="PF17764">
    <property type="entry name" value="PriA_3primeBD"/>
    <property type="match status" value="1"/>
</dbReference>
<dbReference type="Pfam" id="PF18074">
    <property type="entry name" value="PriA_C"/>
    <property type="match status" value="1"/>
</dbReference>
<dbReference type="Pfam" id="PF18319">
    <property type="entry name" value="Zn_ribbon_PriA"/>
    <property type="match status" value="1"/>
</dbReference>
<dbReference type="SMART" id="SM00487">
    <property type="entry name" value="DEXDc"/>
    <property type="match status" value="1"/>
</dbReference>
<dbReference type="SMART" id="SM00490">
    <property type="entry name" value="HELICc"/>
    <property type="match status" value="1"/>
</dbReference>
<dbReference type="SUPFAM" id="SSF52540">
    <property type="entry name" value="P-loop containing nucleoside triphosphate hydrolases"/>
    <property type="match status" value="2"/>
</dbReference>
<dbReference type="PROSITE" id="PS51192">
    <property type="entry name" value="HELICASE_ATP_BIND_1"/>
    <property type="match status" value="1"/>
</dbReference>
<dbReference type="PROSITE" id="PS51194">
    <property type="entry name" value="HELICASE_CTER"/>
    <property type="match status" value="1"/>
</dbReference>
<organism>
    <name type="scientific">Chlamydia pneumoniae</name>
    <name type="common">Chlamydophila pneumoniae</name>
    <dbReference type="NCBI Taxonomy" id="83558"/>
    <lineage>
        <taxon>Bacteria</taxon>
        <taxon>Pseudomonadati</taxon>
        <taxon>Chlamydiota</taxon>
        <taxon>Chlamydiia</taxon>
        <taxon>Chlamydiales</taxon>
        <taxon>Chlamydiaceae</taxon>
        <taxon>Chlamydia/Chlamydophila group</taxon>
        <taxon>Chlamydia</taxon>
    </lineage>
</organism>
<evidence type="ECO:0000255" key="1">
    <source>
        <dbReference type="HAMAP-Rule" id="MF_00983"/>
    </source>
</evidence>
<feature type="chain" id="PRO_0000102121" description="Replication restart protein PriA">
    <location>
        <begin position="1"/>
        <end position="749"/>
    </location>
</feature>
<feature type="domain" description="Helicase ATP-binding" evidence="1">
    <location>
        <begin position="224"/>
        <end position="391"/>
    </location>
</feature>
<feature type="domain" description="Helicase C-terminal" evidence="1">
    <location>
        <begin position="490"/>
        <end position="658"/>
    </location>
</feature>
<feature type="short sequence motif" description="DEAH box" evidence="1">
    <location>
        <begin position="333"/>
        <end position="336"/>
    </location>
</feature>
<feature type="binding site" evidence="1">
    <location>
        <begin position="237"/>
        <end position="244"/>
    </location>
    <ligand>
        <name>ATP</name>
        <dbReference type="ChEBI" id="CHEBI:30616"/>
    </ligand>
</feature>
<feature type="binding site" evidence="1">
    <location>
        <position position="454"/>
    </location>
    <ligand>
        <name>Zn(2+)</name>
        <dbReference type="ChEBI" id="CHEBI:29105"/>
        <label>1</label>
    </ligand>
</feature>
<feature type="binding site" evidence="1">
    <location>
        <position position="457"/>
    </location>
    <ligand>
        <name>Zn(2+)</name>
        <dbReference type="ChEBI" id="CHEBI:29105"/>
        <label>1</label>
    </ligand>
</feature>
<feature type="binding site" evidence="1">
    <location>
        <position position="463"/>
    </location>
    <ligand>
        <name>Zn(2+)</name>
        <dbReference type="ChEBI" id="CHEBI:29105"/>
        <label>2</label>
    </ligand>
</feature>
<feature type="binding site" evidence="1">
    <location>
        <position position="466"/>
    </location>
    <ligand>
        <name>Zn(2+)</name>
        <dbReference type="ChEBI" id="CHEBI:29105"/>
        <label>2</label>
    </ligand>
</feature>
<feature type="binding site" evidence="1">
    <location>
        <position position="481"/>
    </location>
    <ligand>
        <name>Zn(2+)</name>
        <dbReference type="ChEBI" id="CHEBI:29105"/>
        <label>2</label>
    </ligand>
</feature>
<feature type="binding site" evidence="1">
    <location>
        <position position="484"/>
    </location>
    <ligand>
        <name>Zn(2+)</name>
        <dbReference type="ChEBI" id="CHEBI:29105"/>
        <label>2</label>
    </ligand>
</feature>
<feature type="binding site" evidence="1">
    <location>
        <position position="495"/>
    </location>
    <ligand>
        <name>Zn(2+)</name>
        <dbReference type="ChEBI" id="CHEBI:29105"/>
        <label>1</label>
    </ligand>
</feature>
<feature type="binding site" evidence="1">
    <location>
        <position position="498"/>
    </location>
    <ligand>
        <name>Zn(2+)</name>
        <dbReference type="ChEBI" id="CHEBI:29105"/>
        <label>1</label>
    </ligand>
</feature>
<proteinExistence type="inferred from homology"/>
<gene>
    <name evidence="1" type="primary">priA</name>
    <name type="ordered locus">CPn_0924</name>
    <name type="ordered locus">CP_0942</name>
    <name type="ordered locus">CpB0955</name>
</gene>
<comment type="function">
    <text evidence="1">Initiates the restart of stalled replication forks, which reloads the replicative helicase on sites other than the origin of replication. Recognizes and binds to abandoned replication forks and remodels them to uncover a helicase loading site. Promotes assembly of the primosome at these replication forks.</text>
</comment>
<comment type="catalytic activity">
    <reaction evidence="1">
        <text>Couples ATP hydrolysis with the unwinding of duplex DNA by translocating in the 3'-5' direction.</text>
        <dbReference type="EC" id="5.6.2.4"/>
    </reaction>
</comment>
<comment type="catalytic activity">
    <reaction evidence="1">
        <text>ATP + H2O = ADP + phosphate + H(+)</text>
        <dbReference type="Rhea" id="RHEA:13065"/>
        <dbReference type="ChEBI" id="CHEBI:15377"/>
        <dbReference type="ChEBI" id="CHEBI:15378"/>
        <dbReference type="ChEBI" id="CHEBI:30616"/>
        <dbReference type="ChEBI" id="CHEBI:43474"/>
        <dbReference type="ChEBI" id="CHEBI:456216"/>
        <dbReference type="EC" id="5.6.2.4"/>
    </reaction>
</comment>
<comment type="cofactor">
    <cofactor evidence="1">
        <name>Zn(2+)</name>
        <dbReference type="ChEBI" id="CHEBI:29105"/>
    </cofactor>
    <text evidence="1">Binds 2 zinc ions per subunit.</text>
</comment>
<comment type="subunit">
    <text evidence="1">Component of the replication restart primosome.</text>
</comment>
<comment type="similarity">
    <text evidence="1">Belongs to the helicase family. PriA subfamily.</text>
</comment>
<sequence>MGYIESSTFRLYAEVIVGSNINKVLDYGVPENLEHITKGTAVTISLRGGKKVGVIYQIKTTTQCKKILPILGLSDSEIVLPQDLLDLLFWISQYYFAPLGKTLKLFLPAISSNVIQPKQHYRVVLKQSKAKTKEILAKLEVLHPSQGAVLKILLQHASPPGLSSLMETAKVSQSPIHSLEKLGILDIVDAAQLELQEDLLTFFPPAPKDLHPEQQSAIDKIFSSLKTSQFHTHLLFGITGSGKTEIYLRATSEALKQGKSTILLVPEIALTVQTVSLFKARFGKDVGVLHHKLSDSDKSRTWRQASEGSLRILIGPRSALFCPMKNLGLIIVDEEHDPAYKQTESPPCYHARDVAVMRGKLAHATVVLGSATPSLESYTNALSGKYVLSRLSSRAAAAHPAKISLINMNLEREKSKTKILFSQPVLKKIAERLEVGEQVLIFFNRRGYHTNVSCTVCKHTLKCPHCDMVLTFHKYANVLLCHLCNSSPKDLPQSCPKCLGTMTLQYRGSGTEKIEKILQQIFPQIRTIRIDSDTTKFKGSHETLLRQFATGKADVLIGTQMIAKGMNFSAVTLAVILNGDSGLYIPDFRASEQVFQLITQVAGRSGRSHLPGEILIQSFLPDHPTIHSAMRQDYSAFYSQEITGRELCEYPPFIRLIRCIFMGKCPKQTWEEAHRVHNILKEQLESTNPLMPVTPCGHFKIKDTFRYQFLIKSAYVIPVNKKLHHALMLAKLSPKVKFMIDVDPMTTFF</sequence>
<protein>
    <recommendedName>
        <fullName evidence="1">Replication restart protein PriA</fullName>
    </recommendedName>
    <alternativeName>
        <fullName evidence="1">ATP-dependent DNA helicase PriA</fullName>
        <ecNumber evidence="1">5.6.2.4</ecNumber>
    </alternativeName>
    <alternativeName>
        <fullName evidence="1">DNA 3'-5' helicase PriA</fullName>
    </alternativeName>
</protein>
<reference key="1">
    <citation type="journal article" date="1999" name="Nat. Genet.">
        <title>Comparative genomes of Chlamydia pneumoniae and C. trachomatis.</title>
        <authorList>
            <person name="Kalman S."/>
            <person name="Mitchell W.P."/>
            <person name="Marathe R."/>
            <person name="Lammel C.J."/>
            <person name="Fan J."/>
            <person name="Hyman R.W."/>
            <person name="Olinger L."/>
            <person name="Grimwood J."/>
            <person name="Davis R.W."/>
            <person name="Stephens R.S."/>
        </authorList>
    </citation>
    <scope>NUCLEOTIDE SEQUENCE [LARGE SCALE GENOMIC DNA]</scope>
    <source>
        <strain>CWL029</strain>
    </source>
</reference>
<reference key="2">
    <citation type="journal article" date="2000" name="Nucleic Acids Res.">
        <title>Genome sequences of Chlamydia trachomatis MoPn and Chlamydia pneumoniae AR39.</title>
        <authorList>
            <person name="Read T.D."/>
            <person name="Brunham R.C."/>
            <person name="Shen C."/>
            <person name="Gill S.R."/>
            <person name="Heidelberg J.F."/>
            <person name="White O."/>
            <person name="Hickey E.K."/>
            <person name="Peterson J.D."/>
            <person name="Utterback T.R."/>
            <person name="Berry K.J."/>
            <person name="Bass S."/>
            <person name="Linher K.D."/>
            <person name="Weidman J.F."/>
            <person name="Khouri H.M."/>
            <person name="Craven B."/>
            <person name="Bowman C."/>
            <person name="Dodson R.J."/>
            <person name="Gwinn M.L."/>
            <person name="Nelson W.C."/>
            <person name="DeBoy R.T."/>
            <person name="Kolonay J.F."/>
            <person name="McClarty G."/>
            <person name="Salzberg S.L."/>
            <person name="Eisen J.A."/>
            <person name="Fraser C.M."/>
        </authorList>
    </citation>
    <scope>NUCLEOTIDE SEQUENCE [LARGE SCALE GENOMIC DNA]</scope>
    <source>
        <strain>AR39</strain>
    </source>
</reference>
<reference key="3">
    <citation type="journal article" date="2000" name="Nucleic Acids Res.">
        <title>Comparison of whole genome sequences of Chlamydia pneumoniae J138 from Japan and CWL029 from USA.</title>
        <authorList>
            <person name="Shirai M."/>
            <person name="Hirakawa H."/>
            <person name="Kimoto M."/>
            <person name="Tabuchi M."/>
            <person name="Kishi F."/>
            <person name="Ouchi K."/>
            <person name="Shiba T."/>
            <person name="Ishii K."/>
            <person name="Hattori M."/>
            <person name="Kuhara S."/>
            <person name="Nakazawa T."/>
        </authorList>
    </citation>
    <scope>NUCLEOTIDE SEQUENCE [LARGE SCALE GENOMIC DNA]</scope>
    <source>
        <strain>J138</strain>
    </source>
</reference>
<reference key="4">
    <citation type="submission" date="2002-05" db="EMBL/GenBank/DDBJ databases">
        <title>The genome sequence of Chlamydia pneumoniae TW183 and comparison with other Chlamydia strains based on whole genome sequence analysis.</title>
        <authorList>
            <person name="Geng M.M."/>
            <person name="Schuhmacher A."/>
            <person name="Muehldorfer I."/>
            <person name="Bensch K.W."/>
            <person name="Schaefer K.P."/>
            <person name="Schneider S."/>
            <person name="Pohl T."/>
            <person name="Essig A."/>
            <person name="Marre R."/>
            <person name="Melchers K."/>
        </authorList>
    </citation>
    <scope>NUCLEOTIDE SEQUENCE [LARGE SCALE GENOMIC DNA]</scope>
    <source>
        <strain>TW-183</strain>
    </source>
</reference>